<proteinExistence type="evidence at transcript level"/>
<name>TCTP_MICFL</name>
<protein>
    <recommendedName>
        <fullName>Translationally-controlled tumor protein homolog</fullName>
        <shortName>TCTP</shortName>
    </recommendedName>
</protein>
<reference key="1">
    <citation type="journal article" date="2013" name="BMC Genomics">
        <title>The venom-gland transcriptome of the eastern coral snake (Micrurus fulvius) reveals high venom complexity in the intragenomic evolution of venoms.</title>
        <authorList>
            <person name="Margres M.J."/>
            <person name="Aronow K."/>
            <person name="Loyacano J."/>
            <person name="Rokyta D.R."/>
        </authorList>
    </citation>
    <scope>NUCLEOTIDE SEQUENCE [MRNA]</scope>
    <source>
        <tissue>Venom gland</tissue>
    </source>
</reference>
<feature type="chain" id="PRO_0000429461" description="Translationally-controlled tumor protein homolog">
    <location>
        <begin position="1"/>
        <end position="171"/>
    </location>
</feature>
<feature type="domain" description="TCTP" evidence="2">
    <location>
        <begin position="1"/>
        <end position="171"/>
    </location>
</feature>
<accession>U3EQ60</accession>
<keyword id="KW-0964">Secreted</keyword>
<comment type="function">
    <text evidence="1">Venom protein that causes edema, enhances vascular permeability and is likely related to the inflammatory activity of the venom.</text>
</comment>
<comment type="subcellular location">
    <subcellularLocation>
        <location evidence="1">Secreted</location>
    </subcellularLocation>
</comment>
<comment type="tissue specificity">
    <text>Expressed by the venom gland.</text>
</comment>
<comment type="miscellaneous">
    <text evidence="1">Secretion of this protein from cells may proceed via an ER/Golgi-independent pathway, probably mediated by secreted vesicles called exosomes.</text>
</comment>
<comment type="similarity">
    <text evidence="2">Belongs to the TCTP family.</text>
</comment>
<sequence>MIIYRDCISQDEMFSDIYKITEVANGLCLEVEGKMVSRKEGEIDEALIGGNASADGPEDCTEATVITGVDIVMNHHLQETSFTKESYKKYIKDYMKSIKARLEESKPERVKPFMTGAAEQVKHILGNFKNYQFFVGENMNPDGMVGLLDFREDGVTPYMIFFKDGLEMEKC</sequence>
<evidence type="ECO:0000250" key="1"/>
<evidence type="ECO:0000255" key="2">
    <source>
        <dbReference type="PROSITE-ProRule" id="PRU01133"/>
    </source>
</evidence>
<dbReference type="EMBL" id="GAEP01001768">
    <property type="protein sequence ID" value="JAB53053.1"/>
    <property type="molecule type" value="mRNA"/>
</dbReference>
<dbReference type="SMR" id="U3EQ60"/>
<dbReference type="GO" id="GO:0005737">
    <property type="term" value="C:cytoplasm"/>
    <property type="evidence" value="ECO:0007669"/>
    <property type="project" value="TreeGrafter"/>
</dbReference>
<dbReference type="GO" id="GO:0005576">
    <property type="term" value="C:extracellular region"/>
    <property type="evidence" value="ECO:0007669"/>
    <property type="project" value="UniProtKB-SubCell"/>
</dbReference>
<dbReference type="GO" id="GO:0005509">
    <property type="term" value="F:calcium ion binding"/>
    <property type="evidence" value="ECO:0007669"/>
    <property type="project" value="TreeGrafter"/>
</dbReference>
<dbReference type="FunFam" id="2.170.150.10:FF:000001">
    <property type="entry name" value="Tumor protein, translationally-controlled 1"/>
    <property type="match status" value="1"/>
</dbReference>
<dbReference type="Gene3D" id="2.170.150.10">
    <property type="entry name" value="Metal Binding Protein, Guanine Nucleotide Exchange Factor, Chain A"/>
    <property type="match status" value="1"/>
</dbReference>
<dbReference type="InterPro" id="IPR011057">
    <property type="entry name" value="Mss4-like_sf"/>
</dbReference>
<dbReference type="InterPro" id="IPR011323">
    <property type="entry name" value="Mss4/transl-control_tumour"/>
</dbReference>
<dbReference type="InterPro" id="IPR034737">
    <property type="entry name" value="TCTP"/>
</dbReference>
<dbReference type="InterPro" id="IPR018103">
    <property type="entry name" value="Translation_control_tumour_CS"/>
</dbReference>
<dbReference type="InterPro" id="IPR018105">
    <property type="entry name" value="Translational_control_tumour_p"/>
</dbReference>
<dbReference type="PANTHER" id="PTHR11991">
    <property type="entry name" value="TRANSLATIONALLY CONTROLLED TUMOR PROTEIN-RELATED"/>
    <property type="match status" value="1"/>
</dbReference>
<dbReference type="PANTHER" id="PTHR11991:SF0">
    <property type="entry name" value="TRANSLATIONALLY-CONTROLLED TUMOR PROTEIN"/>
    <property type="match status" value="1"/>
</dbReference>
<dbReference type="Pfam" id="PF00838">
    <property type="entry name" value="TCTP"/>
    <property type="match status" value="1"/>
</dbReference>
<dbReference type="PRINTS" id="PR01653">
    <property type="entry name" value="TCTPROTEIN"/>
</dbReference>
<dbReference type="SUPFAM" id="SSF51316">
    <property type="entry name" value="Mss4-like"/>
    <property type="match status" value="1"/>
</dbReference>
<dbReference type="PROSITE" id="PS01003">
    <property type="entry name" value="TCTP_2"/>
    <property type="match status" value="1"/>
</dbReference>
<dbReference type="PROSITE" id="PS51797">
    <property type="entry name" value="TCTP_3"/>
    <property type="match status" value="1"/>
</dbReference>
<organism>
    <name type="scientific">Micrurus fulvius</name>
    <name type="common">Eastern coral snake</name>
    <name type="synonym">Coluber fulvius</name>
    <dbReference type="NCBI Taxonomy" id="8637"/>
    <lineage>
        <taxon>Eukaryota</taxon>
        <taxon>Metazoa</taxon>
        <taxon>Chordata</taxon>
        <taxon>Craniata</taxon>
        <taxon>Vertebrata</taxon>
        <taxon>Euteleostomi</taxon>
        <taxon>Lepidosauria</taxon>
        <taxon>Squamata</taxon>
        <taxon>Bifurcata</taxon>
        <taxon>Unidentata</taxon>
        <taxon>Episquamata</taxon>
        <taxon>Toxicofera</taxon>
        <taxon>Serpentes</taxon>
        <taxon>Colubroidea</taxon>
        <taxon>Elapidae</taxon>
        <taxon>Elapinae</taxon>
        <taxon>Micrurus</taxon>
    </lineage>
</organism>